<gene>
    <name type="primary">hxkA</name>
    <name type="ORF">AN7459</name>
</gene>
<comment type="function">
    <text evidence="1">Catalyzes the phosphorylation of hexose, such as D-glucose and D-fructose, to hexose 6-phosphate (D-glucose 6-phosphate and D-fructose 6-phosphate, respectively). Mediates the initial step of glycolysis by catalyzing phosphorylation of D-glucose to D-glucose 6-phosphate.</text>
</comment>
<comment type="catalytic activity">
    <reaction evidence="1">
        <text>a D-hexose + ATP = a D-hexose 6-phosphate + ADP + H(+)</text>
        <dbReference type="Rhea" id="RHEA:22740"/>
        <dbReference type="ChEBI" id="CHEBI:4194"/>
        <dbReference type="ChEBI" id="CHEBI:15378"/>
        <dbReference type="ChEBI" id="CHEBI:30616"/>
        <dbReference type="ChEBI" id="CHEBI:229467"/>
        <dbReference type="ChEBI" id="CHEBI:456216"/>
        <dbReference type="EC" id="2.7.1.1"/>
    </reaction>
    <physiologicalReaction direction="left-to-right" evidence="1">
        <dbReference type="Rhea" id="RHEA:22741"/>
    </physiologicalReaction>
</comment>
<comment type="catalytic activity">
    <reaction evidence="1">
        <text>D-fructose + ATP = D-fructose 6-phosphate + ADP + H(+)</text>
        <dbReference type="Rhea" id="RHEA:16125"/>
        <dbReference type="ChEBI" id="CHEBI:15378"/>
        <dbReference type="ChEBI" id="CHEBI:30616"/>
        <dbReference type="ChEBI" id="CHEBI:37721"/>
        <dbReference type="ChEBI" id="CHEBI:61527"/>
        <dbReference type="ChEBI" id="CHEBI:456216"/>
        <dbReference type="EC" id="2.7.1.1"/>
    </reaction>
    <physiologicalReaction direction="left-to-right" evidence="1">
        <dbReference type="Rhea" id="RHEA:16126"/>
    </physiologicalReaction>
</comment>
<comment type="catalytic activity">
    <reaction evidence="1">
        <text>D-glucose + ATP = D-glucose 6-phosphate + ADP + H(+)</text>
        <dbReference type="Rhea" id="RHEA:17825"/>
        <dbReference type="ChEBI" id="CHEBI:4167"/>
        <dbReference type="ChEBI" id="CHEBI:15378"/>
        <dbReference type="ChEBI" id="CHEBI:30616"/>
        <dbReference type="ChEBI" id="CHEBI:61548"/>
        <dbReference type="ChEBI" id="CHEBI:456216"/>
        <dbReference type="EC" id="2.7.1.1"/>
    </reaction>
</comment>
<comment type="pathway">
    <text evidence="1">Carbohydrate metabolism; hexose metabolism.</text>
</comment>
<comment type="pathway">
    <text evidence="1">Carbohydrate degradation; glycolysis; D-glyceraldehyde 3-phosphate and glycerone phosphate from D-glucose: step 1/4.</text>
</comment>
<comment type="subunit">
    <text evidence="1">Monomer.</text>
</comment>
<comment type="similarity">
    <text evidence="2 3">Belongs to the hexokinase family.</text>
</comment>
<feature type="chain" id="PRO_0000197607" description="Hexokinase">
    <location>
        <begin position="1"/>
        <end position="490"/>
    </location>
</feature>
<feature type="domain" description="Hexokinase" evidence="2">
    <location>
        <begin position="21"/>
        <end position="466"/>
    </location>
</feature>
<feature type="region of interest" description="Hexokinase small subdomain" evidence="2">
    <location>
        <begin position="75"/>
        <end position="209"/>
    </location>
</feature>
<feature type="region of interest" description="Hexokinase large subdomain" evidence="2">
    <location>
        <begin position="210"/>
        <end position="455"/>
    </location>
</feature>
<accession>P80581</accession>
<accession>C8VBD5</accession>
<accession>Q5AW71</accession>
<protein>
    <recommendedName>
        <fullName>Hexokinase</fullName>
        <ecNumber evidence="1">2.7.1.1</ecNumber>
    </recommendedName>
</protein>
<dbReference type="EC" id="2.7.1.1" evidence="1"/>
<dbReference type="EMBL" id="AACD01000129">
    <property type="protein sequence ID" value="EAA62039.1"/>
    <property type="molecule type" value="Genomic_DNA"/>
</dbReference>
<dbReference type="EMBL" id="BN001304">
    <property type="protein sequence ID" value="CBF79423.1"/>
    <property type="molecule type" value="Genomic_DNA"/>
</dbReference>
<dbReference type="RefSeq" id="XP_680728.1">
    <property type="nucleotide sequence ID" value="XM_675636.1"/>
</dbReference>
<dbReference type="SMR" id="P80581"/>
<dbReference type="FunCoup" id="P80581">
    <property type="interactions" value="851"/>
</dbReference>
<dbReference type="STRING" id="227321.P80581"/>
<dbReference type="EnsemblFungi" id="CBF79423">
    <property type="protein sequence ID" value="CBF79423"/>
    <property type="gene ID" value="ANIA_07459"/>
</dbReference>
<dbReference type="KEGG" id="ani:ANIA_07459"/>
<dbReference type="eggNOG" id="KOG1369">
    <property type="taxonomic scope" value="Eukaryota"/>
</dbReference>
<dbReference type="HOGENOM" id="CLU_014393_5_2_1"/>
<dbReference type="InParanoid" id="P80581"/>
<dbReference type="OMA" id="ADCVQQF"/>
<dbReference type="OrthoDB" id="419537at2759"/>
<dbReference type="UniPathway" id="UPA00109">
    <property type="reaction ID" value="UER00180"/>
</dbReference>
<dbReference type="UniPathway" id="UPA00242"/>
<dbReference type="Proteomes" id="UP000000560">
    <property type="component" value="Chromosome IV"/>
</dbReference>
<dbReference type="GO" id="GO:0005829">
    <property type="term" value="C:cytosol"/>
    <property type="evidence" value="ECO:0000318"/>
    <property type="project" value="GO_Central"/>
</dbReference>
<dbReference type="GO" id="GO:0005739">
    <property type="term" value="C:mitochondrion"/>
    <property type="evidence" value="ECO:0000318"/>
    <property type="project" value="GO_Central"/>
</dbReference>
<dbReference type="GO" id="GO:0005524">
    <property type="term" value="F:ATP binding"/>
    <property type="evidence" value="ECO:0007669"/>
    <property type="project" value="UniProtKB-KW"/>
</dbReference>
<dbReference type="GO" id="GO:0005536">
    <property type="term" value="F:D-glucose binding"/>
    <property type="evidence" value="ECO:0007669"/>
    <property type="project" value="InterPro"/>
</dbReference>
<dbReference type="GO" id="GO:0008865">
    <property type="term" value="F:fructokinase activity"/>
    <property type="evidence" value="ECO:0000318"/>
    <property type="project" value="GO_Central"/>
</dbReference>
<dbReference type="GO" id="GO:0004340">
    <property type="term" value="F:glucokinase activity"/>
    <property type="evidence" value="ECO:0000318"/>
    <property type="project" value="GO_Central"/>
</dbReference>
<dbReference type="GO" id="GO:0019158">
    <property type="term" value="F:mannokinase activity"/>
    <property type="evidence" value="ECO:0000318"/>
    <property type="project" value="GO_Central"/>
</dbReference>
<dbReference type="GO" id="GO:0051156">
    <property type="term" value="P:glucose 6-phosphate metabolic process"/>
    <property type="evidence" value="ECO:0000318"/>
    <property type="project" value="GO_Central"/>
</dbReference>
<dbReference type="GO" id="GO:0006006">
    <property type="term" value="P:glucose metabolic process"/>
    <property type="evidence" value="ECO:0000318"/>
    <property type="project" value="GO_Central"/>
</dbReference>
<dbReference type="GO" id="GO:0006096">
    <property type="term" value="P:glycolytic process"/>
    <property type="evidence" value="ECO:0000318"/>
    <property type="project" value="GO_Central"/>
</dbReference>
<dbReference type="GO" id="GO:0001678">
    <property type="term" value="P:intracellular glucose homeostasis"/>
    <property type="evidence" value="ECO:0000318"/>
    <property type="project" value="GO_Central"/>
</dbReference>
<dbReference type="GO" id="GO:0006013">
    <property type="term" value="P:mannose metabolic process"/>
    <property type="evidence" value="ECO:0000318"/>
    <property type="project" value="GO_Central"/>
</dbReference>
<dbReference type="FunFam" id="1.10.287.1250:FF:000001">
    <property type="entry name" value="Phosphotransferase"/>
    <property type="match status" value="1"/>
</dbReference>
<dbReference type="FunFam" id="3.30.420.40:FF:000092">
    <property type="entry name" value="Phosphotransferase"/>
    <property type="match status" value="1"/>
</dbReference>
<dbReference type="FunFam" id="3.40.367.20:FF:000004">
    <property type="entry name" value="Phosphotransferase"/>
    <property type="match status" value="1"/>
</dbReference>
<dbReference type="Gene3D" id="1.10.287.1250">
    <property type="match status" value="1"/>
</dbReference>
<dbReference type="Gene3D" id="3.30.420.40">
    <property type="match status" value="1"/>
</dbReference>
<dbReference type="Gene3D" id="3.40.367.20">
    <property type="match status" value="1"/>
</dbReference>
<dbReference type="InterPro" id="IPR043129">
    <property type="entry name" value="ATPase_NBD"/>
</dbReference>
<dbReference type="InterPro" id="IPR001312">
    <property type="entry name" value="Hexokinase"/>
</dbReference>
<dbReference type="InterPro" id="IPR019807">
    <property type="entry name" value="Hexokinase_BS"/>
</dbReference>
<dbReference type="InterPro" id="IPR022673">
    <property type="entry name" value="Hexokinase_C"/>
</dbReference>
<dbReference type="InterPro" id="IPR022672">
    <property type="entry name" value="Hexokinase_N"/>
</dbReference>
<dbReference type="PANTHER" id="PTHR19443">
    <property type="entry name" value="HEXOKINASE"/>
    <property type="match status" value="1"/>
</dbReference>
<dbReference type="PANTHER" id="PTHR19443:SF16">
    <property type="entry name" value="HEXOKINASE TYPE 1-RELATED"/>
    <property type="match status" value="1"/>
</dbReference>
<dbReference type="Pfam" id="PF00349">
    <property type="entry name" value="Hexokinase_1"/>
    <property type="match status" value="1"/>
</dbReference>
<dbReference type="Pfam" id="PF03727">
    <property type="entry name" value="Hexokinase_2"/>
    <property type="match status" value="1"/>
</dbReference>
<dbReference type="PRINTS" id="PR00475">
    <property type="entry name" value="HEXOKINASE"/>
</dbReference>
<dbReference type="SUPFAM" id="SSF53067">
    <property type="entry name" value="Actin-like ATPase domain"/>
    <property type="match status" value="2"/>
</dbReference>
<dbReference type="PROSITE" id="PS00378">
    <property type="entry name" value="HEXOKINASE_1"/>
    <property type="match status" value="1"/>
</dbReference>
<dbReference type="PROSITE" id="PS51748">
    <property type="entry name" value="HEXOKINASE_2"/>
    <property type="match status" value="1"/>
</dbReference>
<name>HXK_EMENI</name>
<proteinExistence type="evidence at protein level"/>
<evidence type="ECO:0000250" key="1">
    <source>
        <dbReference type="UniProtKB" id="P33284"/>
    </source>
</evidence>
<evidence type="ECO:0000255" key="2">
    <source>
        <dbReference type="PROSITE-ProRule" id="PRU01084"/>
    </source>
</evidence>
<evidence type="ECO:0000305" key="3"/>
<keyword id="KW-0021">Allosteric enzyme</keyword>
<keyword id="KW-0067">ATP-binding</keyword>
<keyword id="KW-0903">Direct protein sequencing</keyword>
<keyword id="KW-0324">Glycolysis</keyword>
<keyword id="KW-0418">Kinase</keyword>
<keyword id="KW-0547">Nucleotide-binding</keyword>
<keyword id="KW-1185">Reference proteome</keyword>
<keyword id="KW-0808">Transferase</keyword>
<sequence length="490" mass="53925">MVGVGPKRPPSRKGSMSDVPQNLLEHIKHFEEIFTVDTATLKKIVDHFVNELTKGLSVEGGNIPMNVTWVLGFPDGKETGTFLALDMGGTNLRVCEITLTEEKGGFDIIQSKYRMPEELKTGEAEELWQYIVDCVEQFIQFHHENENLSKLPLGFTFSYPATQDYIDHGVLQRWTKGFDIDGVEGKDVVPPLEKVFKERGLPIKVAALINDTTGTLIASSYTDPAMKIGCIFGTGVNAAYMENAGSIPKLAHMNLPPDMPVAINCEYGAFDNEHIVLPLTKYDHIIDRDSPRPGQQAFEKMTAGLYLGEIFRLALVDILDTQPGLIFKDQDTSQLRIPYLLDSSFPAAIEEDPYENLIETAELVQNMLKIKATRSELELMRRLAELIGTRAARLSACGVAAICKKKNIESCHVGADGSVFTKYPHFKARGAQALREILDWAPSEKDKVTIHAAEDGSGVGAALIAALTLKRVKAGNTAGIRDAQAMLAMC</sequence>
<organism>
    <name type="scientific">Emericella nidulans (strain FGSC A4 / ATCC 38163 / CBS 112.46 / NRRL 194 / M139)</name>
    <name type="common">Aspergillus nidulans</name>
    <dbReference type="NCBI Taxonomy" id="227321"/>
    <lineage>
        <taxon>Eukaryota</taxon>
        <taxon>Fungi</taxon>
        <taxon>Dikarya</taxon>
        <taxon>Ascomycota</taxon>
        <taxon>Pezizomycotina</taxon>
        <taxon>Eurotiomycetes</taxon>
        <taxon>Eurotiomycetidae</taxon>
        <taxon>Eurotiales</taxon>
        <taxon>Aspergillaceae</taxon>
        <taxon>Aspergillus</taxon>
        <taxon>Aspergillus subgen. Nidulantes</taxon>
    </lineage>
</organism>
<reference key="1">
    <citation type="journal article" date="2005" name="Nature">
        <title>Sequencing of Aspergillus nidulans and comparative analysis with A. fumigatus and A. oryzae.</title>
        <authorList>
            <person name="Galagan J.E."/>
            <person name="Calvo S.E."/>
            <person name="Cuomo C."/>
            <person name="Ma L.-J."/>
            <person name="Wortman J.R."/>
            <person name="Batzoglou S."/>
            <person name="Lee S.-I."/>
            <person name="Bastuerkmen M."/>
            <person name="Spevak C.C."/>
            <person name="Clutterbuck J."/>
            <person name="Kapitonov V."/>
            <person name="Jurka J."/>
            <person name="Scazzocchio C."/>
            <person name="Farman M.L."/>
            <person name="Butler J."/>
            <person name="Purcell S."/>
            <person name="Harris S."/>
            <person name="Braus G.H."/>
            <person name="Draht O."/>
            <person name="Busch S."/>
            <person name="D'Enfert C."/>
            <person name="Bouchier C."/>
            <person name="Goldman G.H."/>
            <person name="Bell-Pedersen D."/>
            <person name="Griffiths-Jones S."/>
            <person name="Doonan J.H."/>
            <person name="Yu J."/>
            <person name="Vienken K."/>
            <person name="Pain A."/>
            <person name="Freitag M."/>
            <person name="Selker E.U."/>
            <person name="Archer D.B."/>
            <person name="Penalva M.A."/>
            <person name="Oakley B.R."/>
            <person name="Momany M."/>
            <person name="Tanaka T."/>
            <person name="Kumagai T."/>
            <person name="Asai K."/>
            <person name="Machida M."/>
            <person name="Nierman W.C."/>
            <person name="Denning D.W."/>
            <person name="Caddick M.X."/>
            <person name="Hynes M."/>
            <person name="Paoletti M."/>
            <person name="Fischer R."/>
            <person name="Miller B.L."/>
            <person name="Dyer P.S."/>
            <person name="Sachs M.S."/>
            <person name="Osmani S.A."/>
            <person name="Birren B.W."/>
        </authorList>
    </citation>
    <scope>NUCLEOTIDE SEQUENCE [LARGE SCALE GENOMIC DNA]</scope>
    <source>
        <strain>FGSC A4 / ATCC 38163 / CBS 112.46 / NRRL 194 / M139</strain>
    </source>
</reference>
<reference key="2">
    <citation type="journal article" date="2009" name="Fungal Genet. Biol.">
        <title>The 2008 update of the Aspergillus nidulans genome annotation: a community effort.</title>
        <authorList>
            <person name="Wortman J.R."/>
            <person name="Gilsenan J.M."/>
            <person name="Joardar V."/>
            <person name="Deegan J."/>
            <person name="Clutterbuck J."/>
            <person name="Andersen M.R."/>
            <person name="Archer D."/>
            <person name="Bencina M."/>
            <person name="Braus G."/>
            <person name="Coutinho P."/>
            <person name="von Dohren H."/>
            <person name="Doonan J."/>
            <person name="Driessen A.J."/>
            <person name="Durek P."/>
            <person name="Espeso E."/>
            <person name="Fekete E."/>
            <person name="Flipphi M."/>
            <person name="Estrada C.G."/>
            <person name="Geysens S."/>
            <person name="Goldman G."/>
            <person name="de Groot P.W."/>
            <person name="Hansen K."/>
            <person name="Harris S.D."/>
            <person name="Heinekamp T."/>
            <person name="Helmstaedt K."/>
            <person name="Henrissat B."/>
            <person name="Hofmann G."/>
            <person name="Homan T."/>
            <person name="Horio T."/>
            <person name="Horiuchi H."/>
            <person name="James S."/>
            <person name="Jones M."/>
            <person name="Karaffa L."/>
            <person name="Karanyi Z."/>
            <person name="Kato M."/>
            <person name="Keller N."/>
            <person name="Kelly D.E."/>
            <person name="Kiel J.A."/>
            <person name="Kim J.M."/>
            <person name="van der Klei I.J."/>
            <person name="Klis F.M."/>
            <person name="Kovalchuk A."/>
            <person name="Krasevec N."/>
            <person name="Kubicek C.P."/>
            <person name="Liu B."/>
            <person name="Maccabe A."/>
            <person name="Meyer V."/>
            <person name="Mirabito P."/>
            <person name="Miskei M."/>
            <person name="Mos M."/>
            <person name="Mullins J."/>
            <person name="Nelson D.R."/>
            <person name="Nielsen J."/>
            <person name="Oakley B.R."/>
            <person name="Osmani S.A."/>
            <person name="Pakula T."/>
            <person name="Paszewski A."/>
            <person name="Paulsen I."/>
            <person name="Pilsyk S."/>
            <person name="Pocsi I."/>
            <person name="Punt P.J."/>
            <person name="Ram A.F."/>
            <person name="Ren Q."/>
            <person name="Robellet X."/>
            <person name="Robson G."/>
            <person name="Seiboth B."/>
            <person name="van Solingen P."/>
            <person name="Specht T."/>
            <person name="Sun J."/>
            <person name="Taheri-Talesh N."/>
            <person name="Takeshita N."/>
            <person name="Ussery D."/>
            <person name="vanKuyk P.A."/>
            <person name="Visser H."/>
            <person name="van de Vondervoort P.J."/>
            <person name="de Vries R.P."/>
            <person name="Walton J."/>
            <person name="Xiang X."/>
            <person name="Xiong Y."/>
            <person name="Zeng A.P."/>
            <person name="Brandt B.W."/>
            <person name="Cornell M.J."/>
            <person name="van den Hondel C.A."/>
            <person name="Visser J."/>
            <person name="Oliver S.G."/>
            <person name="Turner G."/>
        </authorList>
    </citation>
    <scope>GENOME REANNOTATION</scope>
    <source>
        <strain>FGSC A4 / ATCC 38163 / CBS 112.46 / NRRL 194 / M139</strain>
    </source>
</reference>
<reference key="3">
    <citation type="journal article" date="1996" name="FEMS Microbiol. Lett.">
        <title>Characterisation of the Aspergillus nidulans frA1 mutant: hexose phosphorylation and apparent lack of involvement of hexokinase in glucose repression.</title>
        <authorList>
            <person name="Ruijter G.J.G."/>
            <person name="Panneman H."/>
            <person name="van den Broeck H.C."/>
            <person name="Bennett J.M."/>
            <person name="Visser J."/>
        </authorList>
    </citation>
    <scope>PROTEIN SEQUENCE OF 210-331</scope>
    <source>
        <strain>biA1</strain>
    </source>
</reference>